<reference key="1">
    <citation type="journal article" date="1998" name="Nature">
        <title>The complete genome of the hyperthermophilic bacterium Aquifex aeolicus.</title>
        <authorList>
            <person name="Deckert G."/>
            <person name="Warren P.V."/>
            <person name="Gaasterland T."/>
            <person name="Young W.G."/>
            <person name="Lenox A.L."/>
            <person name="Graham D.E."/>
            <person name="Overbeek R."/>
            <person name="Snead M.A."/>
            <person name="Keller M."/>
            <person name="Aujay M."/>
            <person name="Huber R."/>
            <person name="Feldman R.A."/>
            <person name="Short J.M."/>
            <person name="Olsen G.J."/>
            <person name="Swanson R.V."/>
        </authorList>
    </citation>
    <scope>NUCLEOTIDE SEQUENCE [LARGE SCALE GENOMIC DNA]</scope>
    <source>
        <strain>VF5</strain>
    </source>
</reference>
<protein>
    <recommendedName>
        <fullName>Uncharacterized protein aq_1220</fullName>
        <ecNumber>2.-.-.-</ecNumber>
    </recommendedName>
</protein>
<name>Y1220_AQUAE</name>
<comment type="subcellular location">
    <subcellularLocation>
        <location evidence="2">Cell membrane</location>
        <topology evidence="2">Multi-pass membrane protein</topology>
    </subcellularLocation>
</comment>
<comment type="similarity">
    <text evidence="2">Belongs to the glycosyltransferase 39 family.</text>
</comment>
<sequence length="499" mass="58865">MMKKFLLVLIPVLILYFYNLGYNAVWMPNESFYADSAKNMLKSGEFLTPVYNGEIRLNKPPMTYWIVSLGYKIFGVNELGLRFFHALLGVFTGVLTYLLARRITGSKNTALLSFLILSLSFIFIANARYASPEVPFTFFITLSLYLWYEYFTRKKEFLFWLALIASSLAVLTKGPAGFVLPAGVVFFYLLLRAPKELLKIKYYAGTLMVFLLSGWWFLYQYLVHREEFLEVFIKENVKRIYALQRDPFYFYALDINVSFLPYSFLFFFALFWALKEKRRELSFPLVWFSFIFLIFSIVKMKIPVYIMPAYPAMAIITADFLNSQSLKKVKNLSLIFLWTVLVLATLALSLYFKFSATLFPLIPLLLLPFFLKKYELLPAFGAFAFLFYLSSVILPYVEQFRPYREVGKEIRKLDPKNELRTYELGFFHHNLPFYADRVIIRRTKEVKKPAIVLARKGSFDCEPVRKWELYTSSESRFFKFMLDIKRKKRFEEFLLCVIK</sequence>
<evidence type="ECO:0000255" key="1"/>
<evidence type="ECO:0000305" key="2"/>
<keyword id="KW-1003">Cell membrane</keyword>
<keyword id="KW-0328">Glycosyltransferase</keyword>
<keyword id="KW-0472">Membrane</keyword>
<keyword id="KW-1185">Reference proteome</keyword>
<keyword id="KW-0808">Transferase</keyword>
<keyword id="KW-0812">Transmembrane</keyword>
<keyword id="KW-1133">Transmembrane helix</keyword>
<accession>O67270</accession>
<organism>
    <name type="scientific">Aquifex aeolicus (strain VF5)</name>
    <dbReference type="NCBI Taxonomy" id="224324"/>
    <lineage>
        <taxon>Bacteria</taxon>
        <taxon>Pseudomonadati</taxon>
        <taxon>Aquificota</taxon>
        <taxon>Aquificia</taxon>
        <taxon>Aquificales</taxon>
        <taxon>Aquificaceae</taxon>
        <taxon>Aquifex</taxon>
    </lineage>
</organism>
<feature type="chain" id="PRO_0000121501" description="Uncharacterized protein aq_1220">
    <location>
        <begin position="1"/>
        <end position="499"/>
    </location>
</feature>
<feature type="transmembrane region" description="Helical" evidence="1">
    <location>
        <begin position="5"/>
        <end position="25"/>
    </location>
</feature>
<feature type="transmembrane region" description="Helical" evidence="1">
    <location>
        <begin position="79"/>
        <end position="99"/>
    </location>
</feature>
<feature type="transmembrane region" description="Helical" evidence="1">
    <location>
        <begin position="110"/>
        <end position="130"/>
    </location>
</feature>
<feature type="transmembrane region" description="Helical" evidence="1">
    <location>
        <begin position="132"/>
        <end position="152"/>
    </location>
</feature>
<feature type="transmembrane region" description="Helical" evidence="1">
    <location>
        <begin position="170"/>
        <end position="190"/>
    </location>
</feature>
<feature type="transmembrane region" description="Helical" evidence="1">
    <location>
        <begin position="203"/>
        <end position="223"/>
    </location>
</feature>
<feature type="transmembrane region" description="Helical" evidence="1">
    <location>
        <begin position="252"/>
        <end position="272"/>
    </location>
</feature>
<feature type="transmembrane region" description="Helical" evidence="1">
    <location>
        <begin position="286"/>
        <end position="306"/>
    </location>
</feature>
<feature type="transmembrane region" description="Helical" evidence="1">
    <location>
        <begin position="332"/>
        <end position="352"/>
    </location>
</feature>
<feature type="transmembrane region" description="Helical" evidence="1">
    <location>
        <begin position="354"/>
        <end position="374"/>
    </location>
</feature>
<feature type="transmembrane region" description="Helical" evidence="1">
    <location>
        <begin position="377"/>
        <end position="397"/>
    </location>
</feature>
<dbReference type="EC" id="2.-.-.-"/>
<dbReference type="EMBL" id="AE000657">
    <property type="protein sequence ID" value="AAC07235.1"/>
    <property type="molecule type" value="Genomic_DNA"/>
</dbReference>
<dbReference type="PIR" id="C70405">
    <property type="entry name" value="C70405"/>
</dbReference>
<dbReference type="RefSeq" id="NP_213834.1">
    <property type="nucleotide sequence ID" value="NC_000918.1"/>
</dbReference>
<dbReference type="SMR" id="O67270"/>
<dbReference type="FunCoup" id="O67270">
    <property type="interactions" value="78"/>
</dbReference>
<dbReference type="STRING" id="224324.aq_1220"/>
<dbReference type="CAZy" id="GT83">
    <property type="family name" value="Glycosyltransferase Family 83"/>
</dbReference>
<dbReference type="EnsemblBacteria" id="AAC07235">
    <property type="protein sequence ID" value="AAC07235"/>
    <property type="gene ID" value="aq_1220"/>
</dbReference>
<dbReference type="KEGG" id="aae:aq_1220"/>
<dbReference type="PATRIC" id="fig|224324.8.peg.948"/>
<dbReference type="eggNOG" id="COG1807">
    <property type="taxonomic scope" value="Bacteria"/>
</dbReference>
<dbReference type="HOGENOM" id="CLU_019200_0_1_0"/>
<dbReference type="InParanoid" id="O67270"/>
<dbReference type="OrthoDB" id="9775035at2"/>
<dbReference type="Proteomes" id="UP000000798">
    <property type="component" value="Chromosome"/>
</dbReference>
<dbReference type="GO" id="GO:0005886">
    <property type="term" value="C:plasma membrane"/>
    <property type="evidence" value="ECO:0000318"/>
    <property type="project" value="GO_Central"/>
</dbReference>
<dbReference type="GO" id="GO:0000030">
    <property type="term" value="F:mannosyltransferase activity"/>
    <property type="evidence" value="ECO:0007669"/>
    <property type="project" value="InterPro"/>
</dbReference>
<dbReference type="GO" id="GO:0016763">
    <property type="term" value="F:pentosyltransferase activity"/>
    <property type="evidence" value="ECO:0000318"/>
    <property type="project" value="GO_Central"/>
</dbReference>
<dbReference type="GO" id="GO:0009103">
    <property type="term" value="P:lipopolysaccharide biosynthetic process"/>
    <property type="evidence" value="ECO:0007669"/>
    <property type="project" value="UniProtKB-ARBA"/>
</dbReference>
<dbReference type="GO" id="GO:0006493">
    <property type="term" value="P:protein O-linked glycosylation"/>
    <property type="evidence" value="ECO:0007669"/>
    <property type="project" value="InterPro"/>
</dbReference>
<dbReference type="GO" id="GO:0010041">
    <property type="term" value="P:response to iron(III) ion"/>
    <property type="evidence" value="ECO:0000318"/>
    <property type="project" value="GO_Central"/>
</dbReference>
<dbReference type="InterPro" id="IPR003342">
    <property type="entry name" value="Glyco_trans_39/83"/>
</dbReference>
<dbReference type="InterPro" id="IPR050297">
    <property type="entry name" value="LipidA_mod_glycosyltrf_83"/>
</dbReference>
<dbReference type="PANTHER" id="PTHR33908">
    <property type="entry name" value="MANNOSYLTRANSFERASE YKCB-RELATED"/>
    <property type="match status" value="1"/>
</dbReference>
<dbReference type="PANTHER" id="PTHR33908:SF3">
    <property type="entry name" value="UNDECAPRENYL PHOSPHATE-ALPHA-4-AMINO-4-DEOXY-L-ARABINOSE ARABINOSYL TRANSFERASE"/>
    <property type="match status" value="1"/>
</dbReference>
<dbReference type="Pfam" id="PF02366">
    <property type="entry name" value="PMT"/>
    <property type="match status" value="1"/>
</dbReference>
<proteinExistence type="inferred from homology"/>
<gene>
    <name type="ordered locus">aq_1220</name>
</gene>